<accession>Q9P2K5</accession>
<accession>A7MCZ9</accession>
<accession>C9J921</accession>
<accession>C9K0J4</accession>
<accession>Q6NUM5</accession>
<accession>Q7L388</accession>
<accession>Q7Z4B7</accession>
<accession>Q9H922</accession>
<accession>Q9NUQ1</accession>
<dbReference type="EMBL" id="AB037762">
    <property type="protein sequence ID" value="BAA92579.1"/>
    <property type="status" value="ALT_INIT"/>
    <property type="molecule type" value="mRNA"/>
</dbReference>
<dbReference type="EMBL" id="AK002075">
    <property type="protein sequence ID" value="BAA92070.1"/>
    <property type="molecule type" value="mRNA"/>
</dbReference>
<dbReference type="EMBL" id="AK023133">
    <property type="protein sequence ID" value="BAB14421.1"/>
    <property type="molecule type" value="mRNA"/>
</dbReference>
<dbReference type="EMBL" id="AC066612">
    <property type="status" value="NOT_ANNOTATED_CDS"/>
    <property type="molecule type" value="Genomic_DNA"/>
</dbReference>
<dbReference type="EMBL" id="AC090526">
    <property type="status" value="NOT_ANNOTATED_CDS"/>
    <property type="molecule type" value="Genomic_DNA"/>
</dbReference>
<dbReference type="EMBL" id="BC014533">
    <property type="protein sequence ID" value="AAH14533.3"/>
    <property type="status" value="ALT_INIT"/>
    <property type="molecule type" value="mRNA"/>
</dbReference>
<dbReference type="EMBL" id="BC068523">
    <property type="protein sequence ID" value="AAH68523.1"/>
    <property type="molecule type" value="mRNA"/>
</dbReference>
<dbReference type="EMBL" id="BC152420">
    <property type="protein sequence ID" value="AAI52421.1"/>
    <property type="molecule type" value="mRNA"/>
</dbReference>
<dbReference type="EMBL" id="BC152451">
    <property type="protein sequence ID" value="AAI52452.1"/>
    <property type="molecule type" value="mRNA"/>
</dbReference>
<dbReference type="EMBL" id="AF190159">
    <property type="protein sequence ID" value="AAQ13703.1"/>
    <property type="status" value="ALT_FRAME"/>
    <property type="molecule type" value="mRNA"/>
</dbReference>
<dbReference type="CCDS" id="CCDS32230.1">
    <molecule id="Q9P2K5-1"/>
</dbReference>
<dbReference type="CCDS" id="CCDS73722.1">
    <molecule id="Q9P2K5-2"/>
</dbReference>
<dbReference type="RefSeq" id="NP_001288139.1">
    <property type="nucleotide sequence ID" value="NM_001301210.1"/>
</dbReference>
<dbReference type="RefSeq" id="NP_057216.2">
    <property type="nucleotide sequence ID" value="NM_016132.4"/>
</dbReference>
<dbReference type="SMR" id="Q9P2K5"/>
<dbReference type="BioGRID" id="119124">
    <property type="interactions" value="139"/>
</dbReference>
<dbReference type="FunCoup" id="Q9P2K5">
    <property type="interactions" value="2239"/>
</dbReference>
<dbReference type="IntAct" id="Q9P2K5">
    <property type="interactions" value="58"/>
</dbReference>
<dbReference type="MINT" id="Q9P2K5"/>
<dbReference type="STRING" id="9606.ENSP00000316950"/>
<dbReference type="GlyGen" id="Q9P2K5">
    <property type="glycosylation" value="1 site, 1 O-linked glycan (1 site)"/>
</dbReference>
<dbReference type="iPTMnet" id="Q9P2K5"/>
<dbReference type="MetOSite" id="Q9P2K5"/>
<dbReference type="PhosphoSitePlus" id="Q9P2K5"/>
<dbReference type="SwissPalm" id="Q9P2K5"/>
<dbReference type="BioMuta" id="MYEF2"/>
<dbReference type="DMDM" id="296439294"/>
<dbReference type="jPOST" id="Q9P2K5"/>
<dbReference type="MassIVE" id="Q9P2K5"/>
<dbReference type="PaxDb" id="9606-ENSP00000316950"/>
<dbReference type="PeptideAtlas" id="Q9P2K5"/>
<dbReference type="ProteomicsDB" id="83833">
    <molecule id="Q9P2K5-1"/>
</dbReference>
<dbReference type="ProteomicsDB" id="83834">
    <molecule id="Q9P2K5-2"/>
</dbReference>
<dbReference type="ProteomicsDB" id="83835">
    <molecule id="Q9P2K5-3"/>
</dbReference>
<dbReference type="ProteomicsDB" id="83836">
    <molecule id="Q9P2K5-4"/>
</dbReference>
<dbReference type="Pumba" id="Q9P2K5"/>
<dbReference type="DNASU" id="50804"/>
<dbReference type="Ensembl" id="ENST00000561151.1">
    <molecule id="Q9P2K5-4"/>
    <property type="protein sequence ID" value="ENSP00000452913.1"/>
    <property type="gene ID" value="ENSG00000104177.20"/>
</dbReference>
<dbReference type="Ensembl" id="ENST00000561351.5">
    <molecule id="Q9P2K5-4"/>
    <property type="protein sequence ID" value="ENSP00000453125.1"/>
    <property type="gene ID" value="ENSG00000104177.20"/>
</dbReference>
<dbReference type="GeneID" id="50804"/>
<dbReference type="KEGG" id="hsa:50804"/>
<dbReference type="UCSC" id="uc059iwz.1">
    <molecule id="Q9P2K5-1"/>
    <property type="organism name" value="human"/>
</dbReference>
<dbReference type="AGR" id="HGNC:17940"/>
<dbReference type="CTD" id="50804"/>
<dbReference type="DisGeNET" id="50804"/>
<dbReference type="GeneCards" id="MYEF2"/>
<dbReference type="HGNC" id="HGNC:17940">
    <property type="gene designation" value="MYEF2"/>
</dbReference>
<dbReference type="MalaCards" id="MYEF2"/>
<dbReference type="MIM" id="619395">
    <property type="type" value="gene"/>
</dbReference>
<dbReference type="neXtProt" id="NX_Q9P2K5"/>
<dbReference type="OpenTargets" id="ENSG00000104177"/>
<dbReference type="PharmGKB" id="PA134877084"/>
<dbReference type="VEuPathDB" id="HostDB:ENSG00000104177"/>
<dbReference type="eggNOG" id="ENOG502QV3I">
    <property type="taxonomic scope" value="Eukaryota"/>
</dbReference>
<dbReference type="GeneTree" id="ENSGT00940000157397"/>
<dbReference type="HOGENOM" id="CLU_1980808_0_0_1"/>
<dbReference type="InParanoid" id="Q9P2K5"/>
<dbReference type="OrthoDB" id="610462at2759"/>
<dbReference type="PAN-GO" id="Q9P2K5">
    <property type="GO annotations" value="5 GO annotations based on evolutionary models"/>
</dbReference>
<dbReference type="PhylomeDB" id="Q9P2K5"/>
<dbReference type="TreeFam" id="TF313406"/>
<dbReference type="PathwayCommons" id="Q9P2K5"/>
<dbReference type="SignaLink" id="Q9P2K5"/>
<dbReference type="BioGRID-ORCS" id="50804">
    <property type="hits" value="7 hits in 1152 CRISPR screens"/>
</dbReference>
<dbReference type="CD-CODE" id="DEE660B4">
    <property type="entry name" value="Stress granule"/>
</dbReference>
<dbReference type="ChiTaRS" id="MYEF2">
    <property type="organism name" value="human"/>
</dbReference>
<dbReference type="GenomeRNAi" id="50804"/>
<dbReference type="Pharos" id="Q9P2K5">
    <property type="development level" value="Tbio"/>
</dbReference>
<dbReference type="PRO" id="PR:Q9P2K5"/>
<dbReference type="Proteomes" id="UP000005640">
    <property type="component" value="Chromosome 15"/>
</dbReference>
<dbReference type="RNAct" id="Q9P2K5">
    <property type="molecule type" value="protein"/>
</dbReference>
<dbReference type="Bgee" id="ENSG00000104177">
    <property type="expression patterns" value="Expressed in ventricular zone and 168 other cell types or tissues"/>
</dbReference>
<dbReference type="ExpressionAtlas" id="Q9P2K5">
    <property type="expression patterns" value="baseline and differential"/>
</dbReference>
<dbReference type="GO" id="GO:0005634">
    <property type="term" value="C:nucleus"/>
    <property type="evidence" value="ECO:0000314"/>
    <property type="project" value="UniProtKB"/>
</dbReference>
<dbReference type="GO" id="GO:0003677">
    <property type="term" value="F:DNA binding"/>
    <property type="evidence" value="ECO:0007669"/>
    <property type="project" value="UniProtKB-KW"/>
</dbReference>
<dbReference type="GO" id="GO:0003729">
    <property type="term" value="F:mRNA binding"/>
    <property type="evidence" value="ECO:0000318"/>
    <property type="project" value="GO_Central"/>
</dbReference>
<dbReference type="GO" id="GO:0003723">
    <property type="term" value="F:RNA binding"/>
    <property type="evidence" value="ECO:0007005"/>
    <property type="project" value="UniProtKB"/>
</dbReference>
<dbReference type="GO" id="GO:0014902">
    <property type="term" value="P:myotube differentiation"/>
    <property type="evidence" value="ECO:0000270"/>
    <property type="project" value="UniProtKB"/>
</dbReference>
<dbReference type="GO" id="GO:0030182">
    <property type="term" value="P:neuron differentiation"/>
    <property type="evidence" value="ECO:0000270"/>
    <property type="project" value="UniProtKB"/>
</dbReference>
<dbReference type="CDD" id="cd12658">
    <property type="entry name" value="RRM1_MYEF2"/>
    <property type="match status" value="1"/>
</dbReference>
<dbReference type="CDD" id="cd12660">
    <property type="entry name" value="RRM2_MYEF2"/>
    <property type="match status" value="1"/>
</dbReference>
<dbReference type="CDD" id="cd12662">
    <property type="entry name" value="RRM3_MYEF2"/>
    <property type="match status" value="1"/>
</dbReference>
<dbReference type="FunFam" id="3.30.70.330:FF:000033">
    <property type="entry name" value="heterogeneous nuclear ribonucleoprotein M isoform X1"/>
    <property type="match status" value="1"/>
</dbReference>
<dbReference type="FunFam" id="3.30.70.330:FF:000034">
    <property type="entry name" value="heterogeneous nuclear ribonucleoprotein M isoform X1"/>
    <property type="match status" value="1"/>
</dbReference>
<dbReference type="FunFam" id="3.30.70.330:FF:000625">
    <property type="entry name" value="myelin expression factor 2 isoform X1"/>
    <property type="match status" value="1"/>
</dbReference>
<dbReference type="Gene3D" id="3.30.70.330">
    <property type="match status" value="3"/>
</dbReference>
<dbReference type="InterPro" id="IPR034630">
    <property type="entry name" value="MYEF2_RRM1"/>
</dbReference>
<dbReference type="InterPro" id="IPR034631">
    <property type="entry name" value="MYEF2_RRM3"/>
</dbReference>
<dbReference type="InterPro" id="IPR012677">
    <property type="entry name" value="Nucleotide-bd_a/b_plait_sf"/>
</dbReference>
<dbReference type="InterPro" id="IPR035979">
    <property type="entry name" value="RBD_domain_sf"/>
</dbReference>
<dbReference type="InterPro" id="IPR000504">
    <property type="entry name" value="RRM_dom"/>
</dbReference>
<dbReference type="InterPro" id="IPR050374">
    <property type="entry name" value="RRT5_SRSF_SR"/>
</dbReference>
<dbReference type="PANTHER" id="PTHR23003">
    <property type="entry name" value="RNA RECOGNITION MOTIF RRM DOMAIN CONTAINING PROTEIN"/>
    <property type="match status" value="1"/>
</dbReference>
<dbReference type="Pfam" id="PF00076">
    <property type="entry name" value="RRM_1"/>
    <property type="match status" value="3"/>
</dbReference>
<dbReference type="SMART" id="SM00360">
    <property type="entry name" value="RRM"/>
    <property type="match status" value="3"/>
</dbReference>
<dbReference type="SUPFAM" id="SSF54928">
    <property type="entry name" value="RNA-binding domain, RBD"/>
    <property type="match status" value="3"/>
</dbReference>
<dbReference type="PROSITE" id="PS50102">
    <property type="entry name" value="RRM"/>
    <property type="match status" value="3"/>
</dbReference>
<reference key="1">
    <citation type="journal article" date="2000" name="DNA Res.">
        <title>Prediction of the coding sequences of unidentified human genes. XVI. The complete sequences of 150 new cDNA clones from brain which code for large proteins in vitro.</title>
        <authorList>
            <person name="Nagase T."/>
            <person name="Kikuno R."/>
            <person name="Ishikawa K."/>
            <person name="Hirosawa M."/>
            <person name="Ohara O."/>
        </authorList>
    </citation>
    <scope>NUCLEOTIDE SEQUENCE [LARGE SCALE MRNA] (ISOFORM 1)</scope>
    <scope>VARIANTS THR-91 AND ARG-426</scope>
    <source>
        <tissue>Brain</tissue>
    </source>
</reference>
<reference key="2">
    <citation type="journal article" date="2004" name="Nat. Genet.">
        <title>Complete sequencing and characterization of 21,243 full-length human cDNAs.</title>
        <authorList>
            <person name="Ota T."/>
            <person name="Suzuki Y."/>
            <person name="Nishikawa T."/>
            <person name="Otsuki T."/>
            <person name="Sugiyama T."/>
            <person name="Irie R."/>
            <person name="Wakamatsu A."/>
            <person name="Hayashi K."/>
            <person name="Sato H."/>
            <person name="Nagai K."/>
            <person name="Kimura K."/>
            <person name="Makita H."/>
            <person name="Sekine M."/>
            <person name="Obayashi M."/>
            <person name="Nishi T."/>
            <person name="Shibahara T."/>
            <person name="Tanaka T."/>
            <person name="Ishii S."/>
            <person name="Yamamoto J."/>
            <person name="Saito K."/>
            <person name="Kawai Y."/>
            <person name="Isono Y."/>
            <person name="Nakamura Y."/>
            <person name="Nagahari K."/>
            <person name="Murakami K."/>
            <person name="Yasuda T."/>
            <person name="Iwayanagi T."/>
            <person name="Wagatsuma M."/>
            <person name="Shiratori A."/>
            <person name="Sudo H."/>
            <person name="Hosoiri T."/>
            <person name="Kaku Y."/>
            <person name="Kodaira H."/>
            <person name="Kondo H."/>
            <person name="Sugawara M."/>
            <person name="Takahashi M."/>
            <person name="Kanda K."/>
            <person name="Yokoi T."/>
            <person name="Furuya T."/>
            <person name="Kikkawa E."/>
            <person name="Omura Y."/>
            <person name="Abe K."/>
            <person name="Kamihara K."/>
            <person name="Katsuta N."/>
            <person name="Sato K."/>
            <person name="Tanikawa M."/>
            <person name="Yamazaki M."/>
            <person name="Ninomiya K."/>
            <person name="Ishibashi T."/>
            <person name="Yamashita H."/>
            <person name="Murakawa K."/>
            <person name="Fujimori K."/>
            <person name="Tanai H."/>
            <person name="Kimata M."/>
            <person name="Watanabe M."/>
            <person name="Hiraoka S."/>
            <person name="Chiba Y."/>
            <person name="Ishida S."/>
            <person name="Ono Y."/>
            <person name="Takiguchi S."/>
            <person name="Watanabe S."/>
            <person name="Yosida M."/>
            <person name="Hotuta T."/>
            <person name="Kusano J."/>
            <person name="Kanehori K."/>
            <person name="Takahashi-Fujii A."/>
            <person name="Hara H."/>
            <person name="Tanase T.-O."/>
            <person name="Nomura Y."/>
            <person name="Togiya S."/>
            <person name="Komai F."/>
            <person name="Hara R."/>
            <person name="Takeuchi K."/>
            <person name="Arita M."/>
            <person name="Imose N."/>
            <person name="Musashino K."/>
            <person name="Yuuki H."/>
            <person name="Oshima A."/>
            <person name="Sasaki N."/>
            <person name="Aotsuka S."/>
            <person name="Yoshikawa Y."/>
            <person name="Matsunawa H."/>
            <person name="Ichihara T."/>
            <person name="Shiohata N."/>
            <person name="Sano S."/>
            <person name="Moriya S."/>
            <person name="Momiyama H."/>
            <person name="Satoh N."/>
            <person name="Takami S."/>
            <person name="Terashima Y."/>
            <person name="Suzuki O."/>
            <person name="Nakagawa S."/>
            <person name="Senoh A."/>
            <person name="Mizoguchi H."/>
            <person name="Goto Y."/>
            <person name="Shimizu F."/>
            <person name="Wakebe H."/>
            <person name="Hishigaki H."/>
            <person name="Watanabe T."/>
            <person name="Sugiyama A."/>
            <person name="Takemoto M."/>
            <person name="Kawakami B."/>
            <person name="Yamazaki M."/>
            <person name="Watanabe K."/>
            <person name="Kumagai A."/>
            <person name="Itakura S."/>
            <person name="Fukuzumi Y."/>
            <person name="Fujimori Y."/>
            <person name="Komiyama M."/>
            <person name="Tashiro H."/>
            <person name="Tanigami A."/>
            <person name="Fujiwara T."/>
            <person name="Ono T."/>
            <person name="Yamada K."/>
            <person name="Fujii Y."/>
            <person name="Ozaki K."/>
            <person name="Hirao M."/>
            <person name="Ohmori Y."/>
            <person name="Kawabata A."/>
            <person name="Hikiji T."/>
            <person name="Kobatake N."/>
            <person name="Inagaki H."/>
            <person name="Ikema Y."/>
            <person name="Okamoto S."/>
            <person name="Okitani R."/>
            <person name="Kawakami T."/>
            <person name="Noguchi S."/>
            <person name="Itoh T."/>
            <person name="Shigeta K."/>
            <person name="Senba T."/>
            <person name="Matsumura K."/>
            <person name="Nakajima Y."/>
            <person name="Mizuno T."/>
            <person name="Morinaga M."/>
            <person name="Sasaki M."/>
            <person name="Togashi T."/>
            <person name="Oyama M."/>
            <person name="Hata H."/>
            <person name="Watanabe M."/>
            <person name="Komatsu T."/>
            <person name="Mizushima-Sugano J."/>
            <person name="Satoh T."/>
            <person name="Shirai Y."/>
            <person name="Takahashi Y."/>
            <person name="Nakagawa K."/>
            <person name="Okumura K."/>
            <person name="Nagase T."/>
            <person name="Nomura N."/>
            <person name="Kikuchi H."/>
            <person name="Masuho Y."/>
            <person name="Yamashita R."/>
            <person name="Nakai K."/>
            <person name="Yada T."/>
            <person name="Nakamura Y."/>
            <person name="Ohara O."/>
            <person name="Isogai T."/>
            <person name="Sugano S."/>
        </authorList>
    </citation>
    <scope>NUCLEOTIDE SEQUENCE [LARGE SCALE MRNA] (ISOFORMS 2 AND 3)</scope>
    <scope>VARIANTS THR-91; ARG-426 AND GLY-465</scope>
    <source>
        <tissue>Placenta</tissue>
        <tissue>Teratocarcinoma</tissue>
    </source>
</reference>
<reference key="3">
    <citation type="journal article" date="2006" name="Nature">
        <title>Analysis of the DNA sequence and duplication history of human chromosome 15.</title>
        <authorList>
            <person name="Zody M.C."/>
            <person name="Garber M."/>
            <person name="Sharpe T."/>
            <person name="Young S.K."/>
            <person name="Rowen L."/>
            <person name="O'Neill K."/>
            <person name="Whittaker C.A."/>
            <person name="Kamal M."/>
            <person name="Chang J.L."/>
            <person name="Cuomo C.A."/>
            <person name="Dewar K."/>
            <person name="FitzGerald M.G."/>
            <person name="Kodira C.D."/>
            <person name="Madan A."/>
            <person name="Qin S."/>
            <person name="Yang X."/>
            <person name="Abbasi N."/>
            <person name="Abouelleil A."/>
            <person name="Arachchi H.M."/>
            <person name="Baradarani L."/>
            <person name="Birditt B."/>
            <person name="Bloom S."/>
            <person name="Bloom T."/>
            <person name="Borowsky M.L."/>
            <person name="Burke J."/>
            <person name="Butler J."/>
            <person name="Cook A."/>
            <person name="DeArellano K."/>
            <person name="DeCaprio D."/>
            <person name="Dorris L. III"/>
            <person name="Dors M."/>
            <person name="Eichler E.E."/>
            <person name="Engels R."/>
            <person name="Fahey J."/>
            <person name="Fleetwood P."/>
            <person name="Friedman C."/>
            <person name="Gearin G."/>
            <person name="Hall J.L."/>
            <person name="Hensley G."/>
            <person name="Johnson E."/>
            <person name="Jones C."/>
            <person name="Kamat A."/>
            <person name="Kaur A."/>
            <person name="Locke D.P."/>
            <person name="Madan A."/>
            <person name="Munson G."/>
            <person name="Jaffe D.B."/>
            <person name="Lui A."/>
            <person name="Macdonald P."/>
            <person name="Mauceli E."/>
            <person name="Naylor J.W."/>
            <person name="Nesbitt R."/>
            <person name="Nicol R."/>
            <person name="O'Leary S.B."/>
            <person name="Ratcliffe A."/>
            <person name="Rounsley S."/>
            <person name="She X."/>
            <person name="Sneddon K.M.B."/>
            <person name="Stewart S."/>
            <person name="Sougnez C."/>
            <person name="Stone S.M."/>
            <person name="Topham K."/>
            <person name="Vincent D."/>
            <person name="Wang S."/>
            <person name="Zimmer A.R."/>
            <person name="Birren B.W."/>
            <person name="Hood L."/>
            <person name="Lander E.S."/>
            <person name="Nusbaum C."/>
        </authorList>
    </citation>
    <scope>NUCLEOTIDE SEQUENCE [LARGE SCALE GENOMIC DNA]</scope>
</reference>
<reference key="4">
    <citation type="journal article" date="2004" name="Genome Res.">
        <title>The status, quality, and expansion of the NIH full-length cDNA project: the Mammalian Gene Collection (MGC).</title>
        <authorList>
            <consortium name="The MGC Project Team"/>
        </authorList>
    </citation>
    <scope>NUCLEOTIDE SEQUENCE [LARGE SCALE MRNA] (ISOFORMS 1 AND 4)</scope>
    <scope>NUCLEOTIDE SEQUENCE [LARGE SCALE MRNA] OF 364-600 (ISOFORM 2)</scope>
    <scope>VARIANTS THR-91 AND ARG-426</scope>
    <source>
        <tissue>Bone marrow</tissue>
        <tissue>Testis</tissue>
    </source>
</reference>
<reference key="5">
    <citation type="submission" date="1999-09" db="EMBL/GenBank/DDBJ databases">
        <title>Homo sapiens normal aorta mRNA MST156, complete cds.</title>
        <authorList>
            <person name="Hui R.T."/>
            <person name="Sheng H."/>
            <person name="Qin B.M."/>
            <person name="Liu B."/>
            <person name="Zhao B."/>
            <person name="Liu Y.Q."/>
            <person name="Zhang Q."/>
            <person name="Song L."/>
            <person name="Liu B.H."/>
            <person name="Lu H."/>
            <person name="Wang X.Y."/>
        </authorList>
    </citation>
    <scope>NUCLEOTIDE SEQUENCE [MRNA] OF 39-582 (ISOFORM 2)</scope>
    <scope>VARIANTS THR-91; ARG-426 AND GLY-465</scope>
    <source>
        <tissue>Aorta</tissue>
    </source>
</reference>
<reference key="6">
    <citation type="journal article" date="2009" name="Sci. Signal.">
        <title>Quantitative phosphoproteomic analysis of T cell receptor signaling reveals system-wide modulation of protein-protein interactions.</title>
        <authorList>
            <person name="Mayya V."/>
            <person name="Lundgren D.H."/>
            <person name="Hwang S.-I."/>
            <person name="Rezaul K."/>
            <person name="Wu L."/>
            <person name="Eng J.K."/>
            <person name="Rodionov V."/>
            <person name="Han D.K."/>
        </authorList>
    </citation>
    <scope>IDENTIFICATION BY MASS SPECTROMETRY [LARGE SCALE ANALYSIS]</scope>
    <source>
        <tissue>Leukemic T-cell</tissue>
    </source>
</reference>
<reference key="7">
    <citation type="journal article" date="2011" name="Sci. Signal.">
        <title>System-wide temporal characterization of the proteome and phosphoproteome of human embryonic stem cell differentiation.</title>
        <authorList>
            <person name="Rigbolt K.T."/>
            <person name="Prokhorova T.A."/>
            <person name="Akimov V."/>
            <person name="Henningsen J."/>
            <person name="Johansen P.T."/>
            <person name="Kratchmarova I."/>
            <person name="Kassem M."/>
            <person name="Mann M."/>
            <person name="Olsen J.V."/>
            <person name="Blagoev B."/>
        </authorList>
    </citation>
    <scope>PHOSPHORYLATION [LARGE SCALE ANALYSIS] AT SER-17 AND SER-431</scope>
    <scope>IDENTIFICATION BY MASS SPECTROMETRY [LARGE SCALE ANALYSIS]</scope>
</reference>
<reference key="8">
    <citation type="journal article" date="2014" name="J. Proteomics">
        <title>An enzyme assisted RP-RPLC approach for in-depth analysis of human liver phosphoproteome.</title>
        <authorList>
            <person name="Bian Y."/>
            <person name="Song C."/>
            <person name="Cheng K."/>
            <person name="Dong M."/>
            <person name="Wang F."/>
            <person name="Huang J."/>
            <person name="Sun D."/>
            <person name="Wang L."/>
            <person name="Ye M."/>
            <person name="Zou H."/>
        </authorList>
    </citation>
    <scope>PHOSPHORYLATION [LARGE SCALE ANALYSIS] AT THR-13 AND SER-17</scope>
    <scope>IDENTIFICATION BY MASS SPECTROMETRY [LARGE SCALE ANALYSIS]</scope>
    <source>
        <tissue>Liver</tissue>
    </source>
</reference>
<reference key="9">
    <citation type="journal article" date="2017" name="Nat. Struct. Mol. Biol.">
        <title>Site-specific mapping of the human SUMO proteome reveals co-modification with phosphorylation.</title>
        <authorList>
            <person name="Hendriks I.A."/>
            <person name="Lyon D."/>
            <person name="Young C."/>
            <person name="Jensen L.J."/>
            <person name="Vertegaal A.C."/>
            <person name="Nielsen M.L."/>
        </authorList>
    </citation>
    <scope>SUMOYLATION [LARGE SCALE ANALYSIS] AT LYS-53</scope>
    <scope>IDENTIFICATION BY MASS SPECTROMETRY [LARGE SCALE ANALYSIS]</scope>
</reference>
<comment type="function">
    <text evidence="1">Transcriptional repressor of the myelin basic protein gene (MBP). Binds to the proximal MB1 element 5'-TTGTCC-3' of the MBP promoter. Its binding to MB1 and function are inhibited by PURA (By similarity).</text>
</comment>
<comment type="subunit">
    <text evidence="1">Monomer.</text>
</comment>
<comment type="interaction">
    <interactant intactId="EBI-10318831">
        <id>Q9P2K5-2</id>
    </interactant>
    <interactant intactId="EBI-720875">
        <id>Q96MW5</id>
        <label>COG8</label>
    </interactant>
    <organismsDiffer>false</organismsDiffer>
    <experiments>3</experiments>
</comment>
<comment type="interaction">
    <interactant intactId="EBI-10318831">
        <id>Q9P2K5-2</id>
    </interactant>
    <interactant intactId="EBI-618309">
        <id>Q08379</id>
        <label>GOLGA2</label>
    </interactant>
    <organismsDiffer>false</organismsDiffer>
    <experiments>6</experiments>
</comment>
<comment type="interaction">
    <interactant intactId="EBI-10318831">
        <id>Q9P2K5-2</id>
    </interactant>
    <interactant intactId="EBI-739832">
        <id>Q8TBB1</id>
        <label>LNX1</label>
    </interactant>
    <organismsDiffer>false</organismsDiffer>
    <experiments>3</experiments>
</comment>
<comment type="interaction">
    <interactant intactId="EBI-10318831">
        <id>Q9P2K5-2</id>
    </interactant>
    <interactant intactId="EBI-10271199">
        <id>Q8NI38</id>
        <label>NFKBID</label>
    </interactant>
    <organismsDiffer>false</organismsDiffer>
    <experiments>3</experiments>
</comment>
<comment type="interaction">
    <interactant intactId="EBI-10318831">
        <id>Q9P2K5-2</id>
    </interactant>
    <interactant intactId="EBI-536879">
        <id>O43482</id>
        <label>OIP5</label>
    </interactant>
    <organismsDiffer>false</organismsDiffer>
    <experiments>5</experiments>
</comment>
<comment type="interaction">
    <interactant intactId="EBI-10318831">
        <id>Q9P2K5-2</id>
    </interactant>
    <interactant intactId="EBI-949255">
        <id>Q58EX7</id>
        <label>PLEKHG4</label>
    </interactant>
    <organismsDiffer>false</organismsDiffer>
    <experiments>3</experiments>
</comment>
<comment type="interaction">
    <interactant intactId="EBI-10318831">
        <id>Q9P2K5-2</id>
    </interactant>
    <interactant intactId="EBI-742397">
        <id>Q8IYF3</id>
        <label>TEX11</label>
    </interactant>
    <organismsDiffer>false</organismsDiffer>
    <experiments>3</experiments>
</comment>
<comment type="interaction">
    <interactant intactId="EBI-10318831">
        <id>Q9P2K5-2</id>
    </interactant>
    <interactant intactId="EBI-359224">
        <id>Q13077</id>
        <label>TRAF1</label>
    </interactant>
    <organismsDiffer>false</organismsDiffer>
    <experiments>3</experiments>
</comment>
<comment type="interaction">
    <interactant intactId="EBI-10318831">
        <id>Q9P2K5-2</id>
    </interactant>
    <interactant intactId="EBI-740098">
        <id>P36406</id>
        <label>TRIM23</label>
    </interactant>
    <organismsDiffer>false</organismsDiffer>
    <experiments>3</experiments>
</comment>
<comment type="interaction">
    <interactant intactId="EBI-10318831">
        <id>Q9P2K5-2</id>
    </interactant>
    <interactant intactId="EBI-527853">
        <id>Q9UGI0</id>
        <label>ZRANB1</label>
    </interactant>
    <organismsDiffer>false</organismsDiffer>
    <experiments>3</experiments>
</comment>
<comment type="subcellular location">
    <subcellularLocation>
        <location>Nucleus</location>
    </subcellularLocation>
</comment>
<comment type="alternative products">
    <event type="alternative splicing"/>
    <isoform>
        <id>Q9P2K5-1</id>
        <name>1</name>
        <sequence type="displayed"/>
    </isoform>
    <isoform>
        <id>Q9P2K5-2</id>
        <name>2</name>
        <sequence type="described" ref="VSP_013454"/>
    </isoform>
    <isoform>
        <id>Q9P2K5-3</id>
        <name>3</name>
        <sequence type="described" ref="VSP_013451 VSP_013454"/>
    </isoform>
    <isoform>
        <id>Q9P2K5-4</id>
        <name>4</name>
        <sequence type="described" ref="VSP_013452 VSP_013453"/>
    </isoform>
</comment>
<comment type="sequence caution" evidence="12">
    <conflict type="erroneous initiation">
        <sequence resource="EMBL-CDS" id="AAH14533"/>
    </conflict>
    <text>Truncated N-terminus.</text>
</comment>
<comment type="sequence caution" evidence="12">
    <conflict type="frameshift">
        <sequence resource="EMBL-CDS" id="AAQ13703"/>
    </conflict>
</comment>
<comment type="sequence caution" evidence="12">
    <conflict type="erroneous initiation">
        <sequence resource="EMBL-CDS" id="BAA92579"/>
    </conflict>
    <text>Extended N-terminus.</text>
</comment>
<sequence length="600" mass="64122">MADANKAEVPGATGGDSPHLQPAEPPGEPRREPHPAEAEKQQPQHSSSSNGVKMENDESAKEEKSDLKEKSTGSKKANRFHPYSKDKNSGAGEKKGPNRNRVFISNIPYDMKWQAIKDLMREKVGEVTYVELFKDAEGKSRGCGVVEFKDEEFVKKALETMNKYDLSGRPLNIKEDPDGENARRALQRTGGSFPGGHVPDMGSGLMNLPPSILNNPNIPPEVISNLQAGRLGSTIFVANLDFKVGWKKLKEVFSIAGTVKRADIKEDKDGKSRGMGTVTFEQAIEAVQAISMFNGQFLFDRPMHVKMDDKSVPHEEYRSHDGKTPQLPRGLGGIGMGLGPGGQPISASQLNIGGVMGNLGPGGMGMDGPGFGGMNRIGGGIGFGGLEAMNSMGGFGGVGRMGELYRGAMTSSMERDFGRGDIGINQGFGDSFGRLGSAMIGGFAGRIGSSNMGPVGSGISGGMGSMNSVTGGMGMGLDRMSSSFDRMGPGIGAILERSIDMDRGFLSGPMGSGMRERIGSKGNQIFVRNLPFDLTWQKLKEKFSQCGHVMFAEIKMENGKSKGCGTVRFDSPESAEKACRIMNGIKISGREIDVRLDRNA</sequence>
<organism>
    <name type="scientific">Homo sapiens</name>
    <name type="common">Human</name>
    <dbReference type="NCBI Taxonomy" id="9606"/>
    <lineage>
        <taxon>Eukaryota</taxon>
        <taxon>Metazoa</taxon>
        <taxon>Chordata</taxon>
        <taxon>Craniata</taxon>
        <taxon>Vertebrata</taxon>
        <taxon>Euteleostomi</taxon>
        <taxon>Mammalia</taxon>
        <taxon>Eutheria</taxon>
        <taxon>Euarchontoglires</taxon>
        <taxon>Primates</taxon>
        <taxon>Haplorrhini</taxon>
        <taxon>Catarrhini</taxon>
        <taxon>Hominidae</taxon>
        <taxon>Homo</taxon>
    </lineage>
</organism>
<keyword id="KW-0025">Alternative splicing</keyword>
<keyword id="KW-0238">DNA-binding</keyword>
<keyword id="KW-1017">Isopeptide bond</keyword>
<keyword id="KW-0488">Methylation</keyword>
<keyword id="KW-0539">Nucleus</keyword>
<keyword id="KW-0597">Phosphoprotein</keyword>
<keyword id="KW-1267">Proteomics identification</keyword>
<keyword id="KW-1185">Reference proteome</keyword>
<keyword id="KW-0677">Repeat</keyword>
<keyword id="KW-0678">Repressor</keyword>
<keyword id="KW-0694">RNA-binding</keyword>
<keyword id="KW-0804">Transcription</keyword>
<keyword id="KW-0832">Ubl conjugation</keyword>
<proteinExistence type="evidence at protein level"/>
<evidence type="ECO:0000250" key="1"/>
<evidence type="ECO:0000250" key="2">
    <source>
        <dbReference type="UniProtKB" id="Q8C854"/>
    </source>
</evidence>
<evidence type="ECO:0000255" key="3">
    <source>
        <dbReference type="PROSITE-ProRule" id="PRU00176"/>
    </source>
</evidence>
<evidence type="ECO:0000256" key="4">
    <source>
        <dbReference type="SAM" id="MobiDB-lite"/>
    </source>
</evidence>
<evidence type="ECO:0000269" key="5">
    <source>
    </source>
</evidence>
<evidence type="ECO:0000269" key="6">
    <source>
    </source>
</evidence>
<evidence type="ECO:0000269" key="7">
    <source>
    </source>
</evidence>
<evidence type="ECO:0000269" key="8">
    <source ref="5"/>
</evidence>
<evidence type="ECO:0000303" key="9">
    <source>
    </source>
</evidence>
<evidence type="ECO:0000303" key="10">
    <source>
    </source>
</evidence>
<evidence type="ECO:0000303" key="11">
    <source ref="5"/>
</evidence>
<evidence type="ECO:0000305" key="12"/>
<evidence type="ECO:0007744" key="13">
    <source>
    </source>
</evidence>
<evidence type="ECO:0007744" key="14">
    <source>
    </source>
</evidence>
<evidence type="ECO:0007744" key="15">
    <source>
    </source>
</evidence>
<feature type="chain" id="PRO_0000081655" description="Myelin expression factor 2">
    <location>
        <begin position="1"/>
        <end position="600"/>
    </location>
</feature>
<feature type="domain" description="RRM 1" evidence="3">
    <location>
        <begin position="100"/>
        <end position="178"/>
    </location>
</feature>
<feature type="domain" description="RRM 2" evidence="3">
    <location>
        <begin position="233"/>
        <end position="310"/>
    </location>
</feature>
<feature type="domain" description="RRM 3" evidence="3">
    <location>
        <begin position="523"/>
        <end position="599"/>
    </location>
</feature>
<feature type="region of interest" description="Disordered" evidence="4">
    <location>
        <begin position="1"/>
        <end position="101"/>
    </location>
</feature>
<feature type="compositionally biased region" description="Basic and acidic residues" evidence="4">
    <location>
        <begin position="27"/>
        <end position="42"/>
    </location>
</feature>
<feature type="compositionally biased region" description="Basic and acidic residues" evidence="4">
    <location>
        <begin position="54"/>
        <end position="72"/>
    </location>
</feature>
<feature type="compositionally biased region" description="Basic and acidic residues" evidence="4">
    <location>
        <begin position="83"/>
        <end position="96"/>
    </location>
</feature>
<feature type="modified residue" description="Phosphothreonine" evidence="14">
    <location>
        <position position="13"/>
    </location>
</feature>
<feature type="modified residue" description="Phosphoserine" evidence="13 14">
    <location>
        <position position="17"/>
    </location>
</feature>
<feature type="modified residue" description="Omega-N-methylarginine" evidence="2">
    <location>
        <position position="406"/>
    </location>
</feature>
<feature type="modified residue" description="Phosphoserine" evidence="13">
    <location>
        <position position="431"/>
    </location>
</feature>
<feature type="cross-link" description="Glycyl lysine isopeptide (Lys-Gly) (interchain with G-Cter in SUMO2)" evidence="15">
    <location>
        <position position="53"/>
    </location>
</feature>
<feature type="splice variant" id="VSP_013451" description="In isoform 3." evidence="9">
    <location>
        <begin position="1"/>
        <end position="388"/>
    </location>
</feature>
<feature type="splice variant" id="VSP_013452" description="In isoform 4." evidence="10">
    <original>VGEVT</original>
    <variation>GLWCG</variation>
    <location>
        <begin position="124"/>
        <end position="128"/>
    </location>
</feature>
<feature type="splice variant" id="VSP_013453" description="In isoform 4." evidence="10">
    <location>
        <begin position="129"/>
        <end position="600"/>
    </location>
</feature>
<feature type="splice variant" id="VSP_013454" description="In isoform 2 and isoform 3." evidence="9 10 11">
    <location>
        <begin position="437"/>
        <end position="460"/>
    </location>
</feature>
<feature type="sequence variant" id="VAR_052209" description="In dbSNP:rs8023906." evidence="5 6 7 8">
    <original>A</original>
    <variation>T</variation>
    <location>
        <position position="91"/>
    </location>
</feature>
<feature type="sequence variant" id="VAR_061829" description="In dbSNP:rs2470103." evidence="5 6 7 8">
    <original>Q</original>
    <variation>R</variation>
    <location>
        <position position="426"/>
    </location>
</feature>
<feature type="sequence variant" id="VAR_052210" description="In dbSNP:rs36075490." evidence="6 8">
    <original>S</original>
    <variation>G</variation>
    <location>
        <position position="465"/>
    </location>
</feature>
<feature type="sequence conflict" description="In Ref. 2; BAB14421." evidence="12" ref="2">
    <original>L</original>
    <variation>S</variation>
    <location>
        <position position="186"/>
    </location>
</feature>
<feature type="sequence conflict" description="In Ref. 4; AAH14533." evidence="12" ref="4">
    <original>M</original>
    <variation>G</variation>
    <location>
        <position position="364"/>
    </location>
</feature>
<feature type="sequence conflict" description="In Ref. 5; AAQ13703." evidence="12" ref="5">
    <original>A</original>
    <variation>T</variation>
    <location>
        <position position="578"/>
    </location>
</feature>
<name>MYEF2_HUMAN</name>
<gene>
    <name type="primary">MYEF2</name>
    <name type="synonym">KIAA1341</name>
</gene>
<protein>
    <recommendedName>
        <fullName>Myelin expression factor 2</fullName>
        <shortName>MEF-2</shortName>
        <shortName>MyEF-2</shortName>
    </recommendedName>
    <alternativeName>
        <fullName>MST156</fullName>
    </alternativeName>
</protein>